<reference key="1">
    <citation type="journal article" date="2001" name="Nucleic Acids Res.">
        <title>The complete genome sequence of the murine respiratory pathogen Mycoplasma pulmonis.</title>
        <authorList>
            <person name="Chambaud I."/>
            <person name="Heilig R."/>
            <person name="Ferris S."/>
            <person name="Barbe V."/>
            <person name="Samson D."/>
            <person name="Galisson F."/>
            <person name="Moszer I."/>
            <person name="Dybvig K."/>
            <person name="Wroblewski H."/>
            <person name="Viari A."/>
            <person name="Rocha E.P.C."/>
            <person name="Blanchard A."/>
        </authorList>
    </citation>
    <scope>NUCLEOTIDE SEQUENCE [LARGE SCALE GENOMIC DNA]</scope>
    <source>
        <strain>UAB CTIP</strain>
    </source>
</reference>
<sequence>MNKEQRWKSFFEKEKAQKYFKDELWPFLENEYKNKIIFPKKEDIFKAFDLVDFNNLKVVIIGQDPYINENQAHGLAFSTLDFLLPKSLKNIFIELKNNYPNVVLKSGNLTSWASQGILLLNRVLSVEKGLSSSHYNRGWEIFTFNVIDYISKNFENIIFVLWGKKAQDLKKDINFKNHFILESSHPSPFSANISFFGSQIFLKINKILEQINKEKINWNIE</sequence>
<accession>Q98PV4</accession>
<keyword id="KW-0963">Cytoplasm</keyword>
<keyword id="KW-0227">DNA damage</keyword>
<keyword id="KW-0234">DNA repair</keyword>
<keyword id="KW-0378">Hydrolase</keyword>
<keyword id="KW-1185">Reference proteome</keyword>
<comment type="function">
    <text evidence="1">Excises uracil residues from the DNA which can arise as a result of misincorporation of dUMP residues by DNA polymerase or due to deamination of cytosine.</text>
</comment>
<comment type="catalytic activity">
    <reaction evidence="1">
        <text>Hydrolyzes single-stranded DNA or mismatched double-stranded DNA and polynucleotides, releasing free uracil.</text>
        <dbReference type="EC" id="3.2.2.27"/>
    </reaction>
</comment>
<comment type="subcellular location">
    <subcellularLocation>
        <location evidence="1">Cytoplasm</location>
    </subcellularLocation>
</comment>
<comment type="similarity">
    <text evidence="1">Belongs to the uracil-DNA glycosylase (UDG) superfamily. UNG family.</text>
</comment>
<proteinExistence type="inferred from homology"/>
<gene>
    <name evidence="1" type="primary">ung</name>
    <name type="ordered locus">MYPU_6150</name>
</gene>
<evidence type="ECO:0000255" key="1">
    <source>
        <dbReference type="HAMAP-Rule" id="MF_00148"/>
    </source>
</evidence>
<feature type="chain" id="PRO_0000176117" description="Uracil-DNA glycosylase">
    <location>
        <begin position="1"/>
        <end position="221"/>
    </location>
</feature>
<feature type="active site" description="Proton acceptor" evidence="1">
    <location>
        <position position="64"/>
    </location>
</feature>
<dbReference type="EC" id="3.2.2.27" evidence="1"/>
<dbReference type="EMBL" id="AL445565">
    <property type="protein sequence ID" value="CAC13788.1"/>
    <property type="molecule type" value="Genomic_DNA"/>
</dbReference>
<dbReference type="PIR" id="G90588">
    <property type="entry name" value="G90588"/>
</dbReference>
<dbReference type="RefSeq" id="WP_010925416.1">
    <property type="nucleotide sequence ID" value="NC_002771.1"/>
</dbReference>
<dbReference type="SMR" id="Q98PV4"/>
<dbReference type="STRING" id="272635.gene:17577222"/>
<dbReference type="KEGG" id="mpu:MYPU_6150"/>
<dbReference type="eggNOG" id="COG0692">
    <property type="taxonomic scope" value="Bacteria"/>
</dbReference>
<dbReference type="HOGENOM" id="CLU_032162_3_2_14"/>
<dbReference type="BioCyc" id="MPUL272635:G1GT6-625-MONOMER"/>
<dbReference type="Proteomes" id="UP000000528">
    <property type="component" value="Chromosome"/>
</dbReference>
<dbReference type="GO" id="GO:0005737">
    <property type="term" value="C:cytoplasm"/>
    <property type="evidence" value="ECO:0007669"/>
    <property type="project" value="UniProtKB-SubCell"/>
</dbReference>
<dbReference type="GO" id="GO:0004844">
    <property type="term" value="F:uracil DNA N-glycosylase activity"/>
    <property type="evidence" value="ECO:0007669"/>
    <property type="project" value="UniProtKB-UniRule"/>
</dbReference>
<dbReference type="GO" id="GO:0097510">
    <property type="term" value="P:base-excision repair, AP site formation via deaminated base removal"/>
    <property type="evidence" value="ECO:0007669"/>
    <property type="project" value="TreeGrafter"/>
</dbReference>
<dbReference type="CDD" id="cd10027">
    <property type="entry name" value="UDG-F1-like"/>
    <property type="match status" value="1"/>
</dbReference>
<dbReference type="Gene3D" id="3.40.470.10">
    <property type="entry name" value="Uracil-DNA glycosylase-like domain"/>
    <property type="match status" value="1"/>
</dbReference>
<dbReference type="HAMAP" id="MF_00148">
    <property type="entry name" value="UDG"/>
    <property type="match status" value="1"/>
</dbReference>
<dbReference type="InterPro" id="IPR002043">
    <property type="entry name" value="UDG_fam1"/>
</dbReference>
<dbReference type="InterPro" id="IPR018085">
    <property type="entry name" value="Ura-DNA_Glyclase_AS"/>
</dbReference>
<dbReference type="InterPro" id="IPR005122">
    <property type="entry name" value="Uracil-DNA_glycosylase-like"/>
</dbReference>
<dbReference type="InterPro" id="IPR036895">
    <property type="entry name" value="Uracil-DNA_glycosylase-like_sf"/>
</dbReference>
<dbReference type="NCBIfam" id="NF003588">
    <property type="entry name" value="PRK05254.1-1"/>
    <property type="match status" value="1"/>
</dbReference>
<dbReference type="NCBIfam" id="NF003589">
    <property type="entry name" value="PRK05254.1-2"/>
    <property type="match status" value="1"/>
</dbReference>
<dbReference type="NCBIfam" id="NF003592">
    <property type="entry name" value="PRK05254.1-5"/>
    <property type="match status" value="1"/>
</dbReference>
<dbReference type="NCBIfam" id="TIGR00628">
    <property type="entry name" value="ung"/>
    <property type="match status" value="1"/>
</dbReference>
<dbReference type="PANTHER" id="PTHR11264">
    <property type="entry name" value="URACIL-DNA GLYCOSYLASE"/>
    <property type="match status" value="1"/>
</dbReference>
<dbReference type="PANTHER" id="PTHR11264:SF0">
    <property type="entry name" value="URACIL-DNA GLYCOSYLASE"/>
    <property type="match status" value="1"/>
</dbReference>
<dbReference type="Pfam" id="PF03167">
    <property type="entry name" value="UDG"/>
    <property type="match status" value="1"/>
</dbReference>
<dbReference type="SMART" id="SM00986">
    <property type="entry name" value="UDG"/>
    <property type="match status" value="1"/>
</dbReference>
<dbReference type="SMART" id="SM00987">
    <property type="entry name" value="UreE_C"/>
    <property type="match status" value="1"/>
</dbReference>
<dbReference type="SUPFAM" id="SSF52141">
    <property type="entry name" value="Uracil-DNA glycosylase-like"/>
    <property type="match status" value="1"/>
</dbReference>
<dbReference type="PROSITE" id="PS00130">
    <property type="entry name" value="U_DNA_GLYCOSYLASE"/>
    <property type="match status" value="1"/>
</dbReference>
<protein>
    <recommendedName>
        <fullName evidence="1">Uracil-DNA glycosylase</fullName>
        <shortName evidence="1">UDG</shortName>
        <ecNumber evidence="1">3.2.2.27</ecNumber>
    </recommendedName>
</protein>
<organism>
    <name type="scientific">Mycoplasmopsis pulmonis (strain UAB CTIP)</name>
    <name type="common">Mycoplasma pulmonis</name>
    <dbReference type="NCBI Taxonomy" id="272635"/>
    <lineage>
        <taxon>Bacteria</taxon>
        <taxon>Bacillati</taxon>
        <taxon>Mycoplasmatota</taxon>
        <taxon>Mycoplasmoidales</taxon>
        <taxon>Metamycoplasmataceae</taxon>
        <taxon>Mycoplasmopsis</taxon>
    </lineage>
</organism>
<name>UNG_MYCPU</name>